<reference key="1">
    <citation type="journal article" date="2000" name="Nature">
        <title>A triclosan-resistant bacterial enzyme.</title>
        <authorList>
            <person name="Heath R.J."/>
            <person name="Rock C.O."/>
        </authorList>
    </citation>
    <scope>NUCLEOTIDE SEQUENCE [GENOMIC DNA]</scope>
</reference>
<reference key="2">
    <citation type="journal article" date="2001" name="J. Bacteriol.">
        <title>Genome of the bacterium Streptococcus pneumoniae strain R6.</title>
        <authorList>
            <person name="Hoskins J."/>
            <person name="Alborn W.E. Jr."/>
            <person name="Arnold J."/>
            <person name="Blaszczak L.C."/>
            <person name="Burgett S."/>
            <person name="DeHoff B.S."/>
            <person name="Estrem S.T."/>
            <person name="Fritz L."/>
            <person name="Fu D.-J."/>
            <person name="Fuller W."/>
            <person name="Geringer C."/>
            <person name="Gilmour R."/>
            <person name="Glass J.S."/>
            <person name="Khoja H."/>
            <person name="Kraft A.R."/>
            <person name="Lagace R.E."/>
            <person name="LeBlanc D.J."/>
            <person name="Lee L.N."/>
            <person name="Lefkowitz E.J."/>
            <person name="Lu J."/>
            <person name="Matsushima P."/>
            <person name="McAhren S.M."/>
            <person name="McHenney M."/>
            <person name="McLeaster K."/>
            <person name="Mundy C.W."/>
            <person name="Nicas T.I."/>
            <person name="Norris F.H."/>
            <person name="O'Gara M."/>
            <person name="Peery R.B."/>
            <person name="Robertson G.T."/>
            <person name="Rockey P."/>
            <person name="Sun P.-M."/>
            <person name="Winkler M.E."/>
            <person name="Yang Y."/>
            <person name="Young-Bellido M."/>
            <person name="Zhao G."/>
            <person name="Zook C.A."/>
            <person name="Baltz R.H."/>
            <person name="Jaskunas S.R."/>
            <person name="Rosteck P.R. Jr."/>
            <person name="Skatrud P.L."/>
            <person name="Glass J.I."/>
        </authorList>
    </citation>
    <scope>NUCLEOTIDE SEQUENCE [LARGE SCALE GENOMIC DNA]</scope>
    <source>
        <strain>ATCC BAA-255 / R6</strain>
    </source>
</reference>
<proteinExistence type="inferred from homology"/>
<keyword id="KW-0067">ATP-binding</keyword>
<keyword id="KW-0963">Cytoplasm</keyword>
<keyword id="KW-0275">Fatty acid biosynthesis</keyword>
<keyword id="KW-0276">Fatty acid metabolism</keyword>
<keyword id="KW-0444">Lipid biosynthesis</keyword>
<keyword id="KW-0443">Lipid metabolism</keyword>
<keyword id="KW-0479">Metal-binding</keyword>
<keyword id="KW-0547">Nucleotide-binding</keyword>
<keyword id="KW-1185">Reference proteome</keyword>
<keyword id="KW-0808">Transferase</keyword>
<keyword id="KW-0862">Zinc</keyword>
<keyword id="KW-0863">Zinc-finger</keyword>
<feature type="chain" id="PRO_0000389872" description="Acetyl-coenzyme A carboxylase carboxyl transferase subunit beta">
    <location>
        <begin position="1"/>
        <end position="288"/>
    </location>
</feature>
<feature type="domain" description="CoA carboxyltransferase N-terminal" evidence="2">
    <location>
        <begin position="33"/>
        <end position="288"/>
    </location>
</feature>
<feature type="zinc finger region" description="C4-type" evidence="1">
    <location>
        <begin position="37"/>
        <end position="58"/>
    </location>
</feature>
<feature type="binding site" evidence="1">
    <location>
        <position position="37"/>
    </location>
    <ligand>
        <name>Zn(2+)</name>
        <dbReference type="ChEBI" id="CHEBI:29105"/>
    </ligand>
</feature>
<feature type="binding site" evidence="1">
    <location>
        <position position="40"/>
    </location>
    <ligand>
        <name>Zn(2+)</name>
        <dbReference type="ChEBI" id="CHEBI:29105"/>
    </ligand>
</feature>
<feature type="binding site" evidence="1">
    <location>
        <position position="55"/>
    </location>
    <ligand>
        <name>Zn(2+)</name>
        <dbReference type="ChEBI" id="CHEBI:29105"/>
    </ligand>
</feature>
<feature type="binding site" evidence="1">
    <location>
        <position position="58"/>
    </location>
    <ligand>
        <name>Zn(2+)</name>
        <dbReference type="ChEBI" id="CHEBI:29105"/>
    </ligand>
</feature>
<accession>Q7CRB7</accession>
<accession>Q7D4F5</accession>
<accession>Q9FBB8</accession>
<dbReference type="EC" id="2.1.3.15" evidence="1"/>
<dbReference type="EMBL" id="AF197933">
    <property type="protein sequence ID" value="AAF98280.1"/>
    <property type="molecule type" value="Genomic_DNA"/>
</dbReference>
<dbReference type="EMBL" id="AE007317">
    <property type="protein sequence ID" value="AAK99190.1"/>
    <property type="molecule type" value="Genomic_DNA"/>
</dbReference>
<dbReference type="RefSeq" id="NP_357980.1">
    <property type="nucleotide sequence ID" value="NC_003098.1"/>
</dbReference>
<dbReference type="RefSeq" id="WP_001173353.1">
    <property type="nucleotide sequence ID" value="NC_003098.1"/>
</dbReference>
<dbReference type="SMR" id="Q7CRB7"/>
<dbReference type="STRING" id="171101.spr0386"/>
<dbReference type="KEGG" id="spr:spr0386"/>
<dbReference type="PATRIC" id="fig|171101.6.peg.427"/>
<dbReference type="eggNOG" id="COG0777">
    <property type="taxonomic scope" value="Bacteria"/>
</dbReference>
<dbReference type="HOGENOM" id="CLU_015486_1_1_9"/>
<dbReference type="UniPathway" id="UPA00655">
    <property type="reaction ID" value="UER00711"/>
</dbReference>
<dbReference type="Proteomes" id="UP000000586">
    <property type="component" value="Chromosome"/>
</dbReference>
<dbReference type="GO" id="GO:0009317">
    <property type="term" value="C:acetyl-CoA carboxylase complex"/>
    <property type="evidence" value="ECO:0007669"/>
    <property type="project" value="InterPro"/>
</dbReference>
<dbReference type="GO" id="GO:0003989">
    <property type="term" value="F:acetyl-CoA carboxylase activity"/>
    <property type="evidence" value="ECO:0007669"/>
    <property type="project" value="InterPro"/>
</dbReference>
<dbReference type="GO" id="GO:0005524">
    <property type="term" value="F:ATP binding"/>
    <property type="evidence" value="ECO:0007669"/>
    <property type="project" value="UniProtKB-KW"/>
</dbReference>
<dbReference type="GO" id="GO:0016743">
    <property type="term" value="F:carboxyl- or carbamoyltransferase activity"/>
    <property type="evidence" value="ECO:0007669"/>
    <property type="project" value="UniProtKB-UniRule"/>
</dbReference>
<dbReference type="GO" id="GO:0008270">
    <property type="term" value="F:zinc ion binding"/>
    <property type="evidence" value="ECO:0007669"/>
    <property type="project" value="UniProtKB-UniRule"/>
</dbReference>
<dbReference type="GO" id="GO:2001295">
    <property type="term" value="P:malonyl-CoA biosynthetic process"/>
    <property type="evidence" value="ECO:0007669"/>
    <property type="project" value="UniProtKB-UniRule"/>
</dbReference>
<dbReference type="GO" id="GO:0071768">
    <property type="term" value="P:mycolic acid biosynthetic process"/>
    <property type="evidence" value="ECO:0000318"/>
    <property type="project" value="GO_Central"/>
</dbReference>
<dbReference type="Gene3D" id="3.90.226.10">
    <property type="entry name" value="2-enoyl-CoA Hydratase, Chain A, domain 1"/>
    <property type="match status" value="1"/>
</dbReference>
<dbReference type="HAMAP" id="MF_01395">
    <property type="entry name" value="AcetylCoA_CT_beta"/>
    <property type="match status" value="1"/>
</dbReference>
<dbReference type="InterPro" id="IPR034733">
    <property type="entry name" value="AcCoA_carboxyl_beta"/>
</dbReference>
<dbReference type="InterPro" id="IPR000438">
    <property type="entry name" value="Acetyl_CoA_COase_Trfase_b_su"/>
</dbReference>
<dbReference type="InterPro" id="IPR029045">
    <property type="entry name" value="ClpP/crotonase-like_dom_sf"/>
</dbReference>
<dbReference type="InterPro" id="IPR011762">
    <property type="entry name" value="COA_CT_N"/>
</dbReference>
<dbReference type="NCBIfam" id="TIGR00515">
    <property type="entry name" value="accD"/>
    <property type="match status" value="1"/>
</dbReference>
<dbReference type="PANTHER" id="PTHR42995">
    <property type="entry name" value="ACETYL-COENZYME A CARBOXYLASE CARBOXYL TRANSFERASE SUBUNIT BETA, CHLOROPLASTIC"/>
    <property type="match status" value="1"/>
</dbReference>
<dbReference type="PANTHER" id="PTHR42995:SF5">
    <property type="entry name" value="ACETYL-COENZYME A CARBOXYLASE CARBOXYL TRANSFERASE SUBUNIT BETA, CHLOROPLASTIC"/>
    <property type="match status" value="1"/>
</dbReference>
<dbReference type="Pfam" id="PF01039">
    <property type="entry name" value="Carboxyl_trans"/>
    <property type="match status" value="1"/>
</dbReference>
<dbReference type="PRINTS" id="PR01070">
    <property type="entry name" value="ACCCTRFRASEB"/>
</dbReference>
<dbReference type="SUPFAM" id="SSF52096">
    <property type="entry name" value="ClpP/crotonase"/>
    <property type="match status" value="1"/>
</dbReference>
<dbReference type="PROSITE" id="PS50980">
    <property type="entry name" value="COA_CT_NTER"/>
    <property type="match status" value="1"/>
</dbReference>
<organism>
    <name type="scientific">Streptococcus pneumoniae (strain ATCC BAA-255 / R6)</name>
    <dbReference type="NCBI Taxonomy" id="171101"/>
    <lineage>
        <taxon>Bacteria</taxon>
        <taxon>Bacillati</taxon>
        <taxon>Bacillota</taxon>
        <taxon>Bacilli</taxon>
        <taxon>Lactobacillales</taxon>
        <taxon>Streptococcaceae</taxon>
        <taxon>Streptococcus</taxon>
    </lineage>
</organism>
<protein>
    <recommendedName>
        <fullName evidence="1">Acetyl-coenzyme A carboxylase carboxyl transferase subunit beta</fullName>
        <shortName evidence="1">ACCase subunit beta</shortName>
        <shortName evidence="1">Acetyl-CoA carboxylase carboxyltransferase subunit beta</shortName>
        <ecNumber evidence="1">2.1.3.15</ecNumber>
    </recommendedName>
</protein>
<name>ACCD_STRR6</name>
<evidence type="ECO:0000255" key="1">
    <source>
        <dbReference type="HAMAP-Rule" id="MF_01395"/>
    </source>
</evidence>
<evidence type="ECO:0000255" key="2">
    <source>
        <dbReference type="PROSITE-ProRule" id="PRU01136"/>
    </source>
</evidence>
<gene>
    <name evidence="1" type="primary">accD</name>
    <name type="ordered locus">spr0386</name>
</gene>
<sequence>MALFSKKDKYIRINPNRSVREKPQAKPEVPDELFSQCPGCKHTIYQKDLGSERICPHCSYTFRISAQERLALTIDMGTFKELFTGIESKDPLHFPGYQKKLASMREKTGLHEAVVTGTALIKGQTVALGIMDSNFIMASMGTVVGEKITRLFEYATVEKLPVVLFTASGGARMQEGIMSLMQMAKISAAVKRHSNAGLFYLTILTDPTTGGVTASFAMEGDIILAEPQSLVGFAGRRVIENTVRESLPEDFQKAEFLLEHGFVDAIVKRRDLPDTIASLVRLHGGSPR</sequence>
<comment type="function">
    <text evidence="1">Component of the acetyl coenzyme A carboxylase (ACC) complex. Biotin carboxylase (BC) catalyzes the carboxylation of biotin on its carrier protein (BCCP) and then the CO(2) group is transferred by the transcarboxylase to acetyl-CoA to form malonyl-CoA.</text>
</comment>
<comment type="catalytic activity">
    <reaction evidence="1">
        <text>N(6)-carboxybiotinyl-L-lysyl-[protein] + acetyl-CoA = N(6)-biotinyl-L-lysyl-[protein] + malonyl-CoA</text>
        <dbReference type="Rhea" id="RHEA:54728"/>
        <dbReference type="Rhea" id="RHEA-COMP:10505"/>
        <dbReference type="Rhea" id="RHEA-COMP:10506"/>
        <dbReference type="ChEBI" id="CHEBI:57288"/>
        <dbReference type="ChEBI" id="CHEBI:57384"/>
        <dbReference type="ChEBI" id="CHEBI:83144"/>
        <dbReference type="ChEBI" id="CHEBI:83145"/>
        <dbReference type="EC" id="2.1.3.15"/>
    </reaction>
</comment>
<comment type="cofactor">
    <cofactor evidence="1">
        <name>Zn(2+)</name>
        <dbReference type="ChEBI" id="CHEBI:29105"/>
    </cofactor>
    <text evidence="1">Binds 1 zinc ion per subunit.</text>
</comment>
<comment type="pathway">
    <text evidence="1">Lipid metabolism; malonyl-CoA biosynthesis; malonyl-CoA from acetyl-CoA: step 1/1.</text>
</comment>
<comment type="subunit">
    <text evidence="1">Acetyl-CoA carboxylase is a heterohexamer composed of biotin carboxyl carrier protein (AccB), biotin carboxylase (AccC) and two subunits each of ACCase subunit alpha (AccA) and ACCase subunit beta (AccD).</text>
</comment>
<comment type="subcellular location">
    <subcellularLocation>
        <location evidence="1">Cytoplasm</location>
    </subcellularLocation>
</comment>
<comment type="similarity">
    <text evidence="1">Belongs to the AccD/PCCB family.</text>
</comment>